<dbReference type="EMBL" id="CP001135">
    <property type="protein sequence ID" value="ACY84727.1"/>
    <property type="molecule type" value="Genomic_DNA"/>
</dbReference>
<dbReference type="SMR" id="D0Z8F8"/>
<dbReference type="KEGG" id="etr:ETAE_1890"/>
<dbReference type="HOGENOM" id="CLU_092328_0_0_6"/>
<dbReference type="Proteomes" id="UP000002634">
    <property type="component" value="Chromosome"/>
</dbReference>
<dbReference type="GO" id="GO:0031241">
    <property type="term" value="C:periplasmic side of cell outer membrane"/>
    <property type="evidence" value="ECO:0007669"/>
    <property type="project" value="UniProtKB-UniRule"/>
</dbReference>
<dbReference type="GO" id="GO:0030234">
    <property type="term" value="F:enzyme regulator activity"/>
    <property type="evidence" value="ECO:0007669"/>
    <property type="project" value="UniProtKB-UniRule"/>
</dbReference>
<dbReference type="GO" id="GO:0009252">
    <property type="term" value="P:peptidoglycan biosynthetic process"/>
    <property type="evidence" value="ECO:0007669"/>
    <property type="project" value="UniProtKB-UniRule"/>
</dbReference>
<dbReference type="GO" id="GO:0008360">
    <property type="term" value="P:regulation of cell shape"/>
    <property type="evidence" value="ECO:0007669"/>
    <property type="project" value="UniProtKB-KW"/>
</dbReference>
<dbReference type="Gene3D" id="3.40.50.10610">
    <property type="entry name" value="ABC-type transport auxiliary lipoprotein component"/>
    <property type="match status" value="1"/>
</dbReference>
<dbReference type="HAMAP" id="MF_01889">
    <property type="entry name" value="LpoB"/>
    <property type="match status" value="1"/>
</dbReference>
<dbReference type="InterPro" id="IPR014094">
    <property type="entry name" value="LpoB"/>
</dbReference>
<dbReference type="NCBIfam" id="TIGR02722">
    <property type="entry name" value="lp"/>
    <property type="match status" value="1"/>
</dbReference>
<dbReference type="PANTHER" id="PTHR40593">
    <property type="entry name" value="PENICILLIN-BINDING PROTEIN ACTIVATOR LPOB"/>
    <property type="match status" value="1"/>
</dbReference>
<dbReference type="PANTHER" id="PTHR40593:SF1">
    <property type="entry name" value="PENICILLIN-BINDING PROTEIN ACTIVATOR LPOB"/>
    <property type="match status" value="1"/>
</dbReference>
<dbReference type="Pfam" id="PF13036">
    <property type="entry name" value="LpoB"/>
    <property type="match status" value="1"/>
</dbReference>
<dbReference type="PROSITE" id="PS51257">
    <property type="entry name" value="PROKAR_LIPOPROTEIN"/>
    <property type="match status" value="1"/>
</dbReference>
<proteinExistence type="inferred from homology"/>
<evidence type="ECO:0000255" key="1">
    <source>
        <dbReference type="HAMAP-Rule" id="MF_01889"/>
    </source>
</evidence>
<evidence type="ECO:0000256" key="2">
    <source>
        <dbReference type="SAM" id="MobiDB-lite"/>
    </source>
</evidence>
<reference key="1">
    <citation type="journal article" date="2009" name="PLoS ONE">
        <title>Genome sequence of the versatile fish pathogen Edwardsiella tarda provides insights into its adaptation to broad host ranges and intracellular niches.</title>
        <authorList>
            <person name="Wang Q."/>
            <person name="Yang M."/>
            <person name="Xiao J."/>
            <person name="Wu H."/>
            <person name="Wang X."/>
            <person name="Lv Y."/>
            <person name="Xu L."/>
            <person name="Zheng H."/>
            <person name="Wang S."/>
            <person name="Zhao G."/>
            <person name="Liu Q."/>
            <person name="Zhang Y."/>
        </authorList>
    </citation>
    <scope>NUCLEOTIDE SEQUENCE [LARGE SCALE GENOMIC DNA]</scope>
    <source>
        <strain>EIB202 / CCTCC M208068</strain>
    </source>
</reference>
<name>LPOB_EDWPI</name>
<gene>
    <name evidence="1" type="primary">lpoB</name>
    <name type="ordered locus">ETAE_1890</name>
</gene>
<sequence length="197" mass="20329">MIKRMSGIALAALLLSGCQGLLPRGETPSQPPAPTTPAKPSVVPTPTPPVVTPVPQPPKMTSVDWQGSFAPLIDQLLSAPGVEAGSILLVDGVQNKTNGQLSMANASEVLRSALAGNPRFQMVSTAQLAQAKQSLGLAANDSLGSRSKAIGLARQVSAQYVLYTTVSGNVQAPRLAMQLMLVQSGEIIWSGKGPVAL</sequence>
<accession>D0Z8F8</accession>
<feature type="signal peptide" evidence="1">
    <location>
        <begin position="1"/>
        <end position="17"/>
    </location>
</feature>
<feature type="chain" id="PRO_0000405782" description="Penicillin-binding protein activator LpoB">
    <location>
        <begin position="18"/>
        <end position="197"/>
    </location>
</feature>
<feature type="region of interest" description="Disordered" evidence="2">
    <location>
        <begin position="23"/>
        <end position="57"/>
    </location>
</feature>
<feature type="compositionally biased region" description="Pro residues" evidence="2">
    <location>
        <begin position="29"/>
        <end position="57"/>
    </location>
</feature>
<feature type="lipid moiety-binding region" description="N-palmitoyl cysteine" evidence="1">
    <location>
        <position position="18"/>
    </location>
</feature>
<feature type="lipid moiety-binding region" description="S-diacylglycerol cysteine" evidence="1">
    <location>
        <position position="18"/>
    </location>
</feature>
<organism>
    <name type="scientific">Edwardsiella piscicida</name>
    <dbReference type="NCBI Taxonomy" id="1263550"/>
    <lineage>
        <taxon>Bacteria</taxon>
        <taxon>Pseudomonadati</taxon>
        <taxon>Pseudomonadota</taxon>
        <taxon>Gammaproteobacteria</taxon>
        <taxon>Enterobacterales</taxon>
        <taxon>Hafniaceae</taxon>
        <taxon>Edwardsiella</taxon>
    </lineage>
</organism>
<comment type="function">
    <text evidence="1">Regulator of peptidoglycan synthesis that is essential for the function of penicillin-binding protein 1B (PBP1b).</text>
</comment>
<comment type="subunit">
    <text evidence="1">Interacts with PBP1b.</text>
</comment>
<comment type="subcellular location">
    <subcellularLocation>
        <location evidence="1">Cell outer membrane</location>
        <topology evidence="1">Lipid-anchor</topology>
        <orientation evidence="1">Periplasmic side</orientation>
    </subcellularLocation>
</comment>
<comment type="similarity">
    <text evidence="1">Belongs to the LpoB family.</text>
</comment>
<protein>
    <recommendedName>
        <fullName evidence="1">Penicillin-binding protein activator LpoB</fullName>
        <shortName evidence="1">PBP activator LpoB</shortName>
    </recommendedName>
</protein>
<keyword id="KW-0998">Cell outer membrane</keyword>
<keyword id="KW-0133">Cell shape</keyword>
<keyword id="KW-0449">Lipoprotein</keyword>
<keyword id="KW-0472">Membrane</keyword>
<keyword id="KW-0564">Palmitate</keyword>
<keyword id="KW-0573">Peptidoglycan synthesis</keyword>
<keyword id="KW-1185">Reference proteome</keyword>
<keyword id="KW-0732">Signal</keyword>